<protein>
    <recommendedName>
        <fullName>Uncharacterized protein ORF77</fullName>
    </recommendedName>
</protein>
<sequence length="77" mass="9018">MERMLLKKLYALDDIQVGIFEVESKIQYYIAVLIDGLNFEVWGKGKTPYEAIINASEKWSNSFGGFNPFREALRLRW</sequence>
<accession>Q70LE2</accession>
<keyword id="KW-1185">Reference proteome</keyword>
<name>Y077_AFV1Y</name>
<reference key="1">
    <citation type="journal article" date="2003" name="Virology">
        <title>AFV1, a novel virus infecting hyperthermophilic archaea of the genus acidianus.</title>
        <authorList>
            <person name="Bettstetter M."/>
            <person name="Peng X."/>
            <person name="Garrett R.A."/>
            <person name="Prangishvili D."/>
        </authorList>
    </citation>
    <scope>NUCLEOTIDE SEQUENCE [GENOMIC DNA]</scope>
</reference>
<organismHost>
    <name type="scientific">Acidianus hospitalis</name>
    <dbReference type="NCBI Taxonomy" id="563177"/>
</organismHost>
<organismHost>
    <name type="scientific">Acidianus infernus</name>
    <dbReference type="NCBI Taxonomy" id="12915"/>
</organismHost>
<gene>
    <name type="ORF">ORF77</name>
</gene>
<organism>
    <name type="scientific">Acidianus filamentous virus 1 (isolate United States/Yellowstone)</name>
    <name type="common">AFV-1</name>
    <dbReference type="NCBI Taxonomy" id="654909"/>
    <lineage>
        <taxon>Viruses</taxon>
        <taxon>Adnaviria</taxon>
        <taxon>Zilligvirae</taxon>
        <taxon>Taleaviricota</taxon>
        <taxon>Tokiviricetes</taxon>
        <taxon>Ligamenvirales</taxon>
        <taxon>Ungulaviridae</taxon>
        <taxon>Captovirus</taxon>
        <taxon>Acidianus filamentous virus 1</taxon>
    </lineage>
</organism>
<dbReference type="EMBL" id="AJ567472">
    <property type="protein sequence ID" value="CAD98938.1"/>
    <property type="molecule type" value="Genomic_DNA"/>
</dbReference>
<dbReference type="RefSeq" id="YP_003734.1">
    <property type="nucleotide sequence ID" value="NC_005830.1"/>
</dbReference>
<dbReference type="SMR" id="Q70LE2"/>
<dbReference type="KEGG" id="vg:2769196"/>
<dbReference type="Proteomes" id="UP000000514">
    <property type="component" value="Genome"/>
</dbReference>
<feature type="chain" id="PRO_0000384546" description="Uncharacterized protein ORF77">
    <location>
        <begin position="1"/>
        <end position="77"/>
    </location>
</feature>
<proteinExistence type="predicted"/>